<proteinExistence type="inferred from homology"/>
<accession>Q54PA4</accession>
<organism>
    <name type="scientific">Dictyostelium discoideum</name>
    <name type="common">Social amoeba</name>
    <dbReference type="NCBI Taxonomy" id="44689"/>
    <lineage>
        <taxon>Eukaryota</taxon>
        <taxon>Amoebozoa</taxon>
        <taxon>Evosea</taxon>
        <taxon>Eumycetozoa</taxon>
        <taxon>Dictyostelia</taxon>
        <taxon>Dictyosteliales</taxon>
        <taxon>Dictyosteliaceae</taxon>
        <taxon>Dictyostelium</taxon>
    </lineage>
</organism>
<name>EXPL2_DICDI</name>
<feature type="signal peptide" evidence="1">
    <location>
        <begin position="1"/>
        <end position="23"/>
    </location>
</feature>
<feature type="chain" id="PRO_0000368216" description="Expansin-like protein 2">
    <location>
        <begin position="24"/>
        <end position="407"/>
    </location>
</feature>
<feature type="domain" description="Expansin-like EG45" evidence="2">
    <location>
        <begin position="42"/>
        <end position="141"/>
    </location>
</feature>
<feature type="glycosylation site" description="N-linked (GlcNAc...) asparagine" evidence="1">
    <location>
        <position position="70"/>
    </location>
</feature>
<feature type="glycosylation site" description="N-linked (GlcNAc...) asparagine" evidence="1">
    <location>
        <position position="117"/>
    </location>
</feature>
<feature type="glycosylation site" description="N-linked (GlcNAc...) asparagine" evidence="1">
    <location>
        <position position="387"/>
    </location>
</feature>
<feature type="disulfide bond" evidence="2">
    <location>
        <begin position="45"/>
        <end position="75"/>
    </location>
</feature>
<feature type="disulfide bond" evidence="2">
    <location>
        <begin position="78"/>
        <end position="136"/>
    </location>
</feature>
<reference key="1">
    <citation type="journal article" date="2005" name="Nature">
        <title>The genome of the social amoeba Dictyostelium discoideum.</title>
        <authorList>
            <person name="Eichinger L."/>
            <person name="Pachebat J.A."/>
            <person name="Gloeckner G."/>
            <person name="Rajandream M.A."/>
            <person name="Sucgang R."/>
            <person name="Berriman M."/>
            <person name="Song J."/>
            <person name="Olsen R."/>
            <person name="Szafranski K."/>
            <person name="Xu Q."/>
            <person name="Tunggal B."/>
            <person name="Kummerfeld S."/>
            <person name="Madera M."/>
            <person name="Konfortov B.A."/>
            <person name="Rivero F."/>
            <person name="Bankier A.T."/>
            <person name="Lehmann R."/>
            <person name="Hamlin N."/>
            <person name="Davies R."/>
            <person name="Gaudet P."/>
            <person name="Fey P."/>
            <person name="Pilcher K."/>
            <person name="Chen G."/>
            <person name="Saunders D."/>
            <person name="Sodergren E.J."/>
            <person name="Davis P."/>
            <person name="Kerhornou A."/>
            <person name="Nie X."/>
            <person name="Hall N."/>
            <person name="Anjard C."/>
            <person name="Hemphill L."/>
            <person name="Bason N."/>
            <person name="Farbrother P."/>
            <person name="Desany B."/>
            <person name="Just E."/>
            <person name="Morio T."/>
            <person name="Rost R."/>
            <person name="Churcher C.M."/>
            <person name="Cooper J."/>
            <person name="Haydock S."/>
            <person name="van Driessche N."/>
            <person name="Cronin A."/>
            <person name="Goodhead I."/>
            <person name="Muzny D.M."/>
            <person name="Mourier T."/>
            <person name="Pain A."/>
            <person name="Lu M."/>
            <person name="Harper D."/>
            <person name="Lindsay R."/>
            <person name="Hauser H."/>
            <person name="James K.D."/>
            <person name="Quiles M."/>
            <person name="Madan Babu M."/>
            <person name="Saito T."/>
            <person name="Buchrieser C."/>
            <person name="Wardroper A."/>
            <person name="Felder M."/>
            <person name="Thangavelu M."/>
            <person name="Johnson D."/>
            <person name="Knights A."/>
            <person name="Loulseged H."/>
            <person name="Mungall K.L."/>
            <person name="Oliver K."/>
            <person name="Price C."/>
            <person name="Quail M.A."/>
            <person name="Urushihara H."/>
            <person name="Hernandez J."/>
            <person name="Rabbinowitsch E."/>
            <person name="Steffen D."/>
            <person name="Sanders M."/>
            <person name="Ma J."/>
            <person name="Kohara Y."/>
            <person name="Sharp S."/>
            <person name="Simmonds M.N."/>
            <person name="Spiegler S."/>
            <person name="Tivey A."/>
            <person name="Sugano S."/>
            <person name="White B."/>
            <person name="Walker D."/>
            <person name="Woodward J.R."/>
            <person name="Winckler T."/>
            <person name="Tanaka Y."/>
            <person name="Shaulsky G."/>
            <person name="Schleicher M."/>
            <person name="Weinstock G.M."/>
            <person name="Rosenthal A."/>
            <person name="Cox E.C."/>
            <person name="Chisholm R.L."/>
            <person name="Gibbs R.A."/>
            <person name="Loomis W.F."/>
            <person name="Platzer M."/>
            <person name="Kay R.R."/>
            <person name="Williams J.G."/>
            <person name="Dear P.H."/>
            <person name="Noegel A.A."/>
            <person name="Barrell B.G."/>
            <person name="Kuspa A."/>
        </authorList>
    </citation>
    <scope>NUCLEOTIDE SEQUENCE [LARGE SCALE GENOMIC DNA]</scope>
    <source>
        <strain>AX4</strain>
    </source>
</reference>
<reference key="2">
    <citation type="journal article" date="2003" name="FEBS Lett.">
        <title>Expression of a family of expansin-like proteins during the development of Dictyostelium discoideum.</title>
        <authorList>
            <person name="Darley C.P."/>
            <person name="Li Y."/>
            <person name="Schaap P."/>
            <person name="McQueen-Mason S.J."/>
        </authorList>
    </citation>
    <scope>SUBCELLULAR LOCATION</scope>
    <scope>FUNCTION</scope>
</reference>
<reference key="3">
    <citation type="journal article" date="2002" name="Plant Physiol.">
        <title>Plant expansins are a complex multigene family with an ancient evolutionary origin.</title>
        <authorList>
            <person name="Li Y."/>
            <person name="Darley C.P."/>
            <person name="Ongaro V."/>
            <person name="Fleming A."/>
            <person name="Schipper O."/>
            <person name="Baldauf S.L."/>
            <person name="McQueen-Mason S.J."/>
        </authorList>
    </citation>
    <scope>FUNCTION</scope>
</reference>
<sequence>MKMKNFLSKSLLVLLIGLIGVKSADLSDCFSSRSTWYEAIQHGNCGYEQLTGKLGPGNLMIAAAATALYNGSFACGECYEIYGPGGTGKVMIVDQCPDPGWCDTPFPHLDLSPTAFNTTIGSTVGVAMTTVKKVSCDVTGNIKAYMKDAATTNTWFEFMVFNHRVGIASISVEDSKGTITSLPRRLYNYWTYNGNAASFPVIAHVYSIYGDQVDIYLTSSAGAQLYEGVGQFADPATTFADDCTAPFPVDTDGYIYDNGLVKPLNYNHPNLGWSDWSNGVTVNWADSSTPGADSTSKVVASGTLAYNTGIQIGTDLPVEWEGRFTALEFYIKADKDFTGLVVEYNGASKSQTPSLTTTWTKYTYDLTKDLGAPASLGKPAALKFRNNGSGSVKVYLDKIRLTPVASS</sequence>
<dbReference type="EMBL" id="AAFI02000070">
    <property type="protein sequence ID" value="EAL65108.1"/>
    <property type="molecule type" value="Genomic_DNA"/>
</dbReference>
<dbReference type="RefSeq" id="XP_638471.1">
    <property type="nucleotide sequence ID" value="XM_633379.1"/>
</dbReference>
<dbReference type="SMR" id="Q54PA4"/>
<dbReference type="GlyCosmos" id="Q54PA4">
    <property type="glycosylation" value="3 sites, No reported glycans"/>
</dbReference>
<dbReference type="GlyGen" id="Q54PA4">
    <property type="glycosylation" value="4 sites"/>
</dbReference>
<dbReference type="PaxDb" id="44689-DDB0231624"/>
<dbReference type="EnsemblProtists" id="EAL65108">
    <property type="protein sequence ID" value="EAL65108"/>
    <property type="gene ID" value="DDB_G0284677"/>
</dbReference>
<dbReference type="GeneID" id="8624722"/>
<dbReference type="KEGG" id="ddi:DDB_G0284677"/>
<dbReference type="dictyBase" id="DDB_G0284677">
    <property type="gene designation" value="expl2"/>
</dbReference>
<dbReference type="VEuPathDB" id="AmoebaDB:DDB_G0284677"/>
<dbReference type="eggNOG" id="ENOG502SBE5">
    <property type="taxonomic scope" value="Eukaryota"/>
</dbReference>
<dbReference type="HOGENOM" id="CLU_620314_0_0_1"/>
<dbReference type="InParanoid" id="Q54PA4"/>
<dbReference type="OMA" id="RSTWYEA"/>
<dbReference type="PhylomeDB" id="Q54PA4"/>
<dbReference type="PRO" id="PR:Q54PA4"/>
<dbReference type="Proteomes" id="UP000002195">
    <property type="component" value="Chromosome 4"/>
</dbReference>
<dbReference type="GO" id="GO:0005576">
    <property type="term" value="C:extracellular region"/>
    <property type="evidence" value="ECO:0007669"/>
    <property type="project" value="UniProtKB-SubCell"/>
</dbReference>
<dbReference type="CDD" id="cd22271">
    <property type="entry name" value="DPBB_EXP_N-like"/>
    <property type="match status" value="1"/>
</dbReference>
<dbReference type="Gene3D" id="2.60.40.760">
    <property type="entry name" value="Expansin, cellulose-binding-like domain"/>
    <property type="match status" value="1"/>
</dbReference>
<dbReference type="Gene3D" id="2.60.120.260">
    <property type="entry name" value="Galactose-binding domain-like"/>
    <property type="match status" value="1"/>
</dbReference>
<dbReference type="Gene3D" id="2.40.40.10">
    <property type="entry name" value="RlpA-like domain"/>
    <property type="match status" value="1"/>
</dbReference>
<dbReference type="InterPro" id="IPR007112">
    <property type="entry name" value="Expansin/allergen_DPBB_dom"/>
</dbReference>
<dbReference type="InterPro" id="IPR036749">
    <property type="entry name" value="Expansin_CBD_sf"/>
</dbReference>
<dbReference type="InterPro" id="IPR051477">
    <property type="entry name" value="Expansin_CellWall"/>
</dbReference>
<dbReference type="InterPro" id="IPR008979">
    <property type="entry name" value="Galactose-bd-like_sf"/>
</dbReference>
<dbReference type="InterPro" id="IPR036908">
    <property type="entry name" value="RlpA-like_sf"/>
</dbReference>
<dbReference type="PANTHER" id="PTHR31836">
    <property type="match status" value="1"/>
</dbReference>
<dbReference type="PANTHER" id="PTHR31836:SF26">
    <property type="entry name" value="EXPANSIN-LIKE PROTEIN 2"/>
    <property type="match status" value="1"/>
</dbReference>
<dbReference type="SUPFAM" id="SSF50685">
    <property type="entry name" value="Barwin-like endoglucanases"/>
    <property type="match status" value="1"/>
</dbReference>
<dbReference type="SUPFAM" id="SSF49785">
    <property type="entry name" value="Galactose-binding domain-like"/>
    <property type="match status" value="1"/>
</dbReference>
<dbReference type="PROSITE" id="PS50842">
    <property type="entry name" value="EXPANSIN_EG45"/>
    <property type="match status" value="1"/>
</dbReference>
<keyword id="KW-1015">Disulfide bond</keyword>
<keyword id="KW-0325">Glycoprotein</keyword>
<keyword id="KW-1185">Reference proteome</keyword>
<keyword id="KW-0964">Secreted</keyword>
<keyword id="KW-0732">Signal</keyword>
<evidence type="ECO:0000255" key="1"/>
<evidence type="ECO:0000255" key="2">
    <source>
        <dbReference type="PROSITE-ProRule" id="PRU00079"/>
    </source>
</evidence>
<evidence type="ECO:0000269" key="3">
    <source>
    </source>
</evidence>
<evidence type="ECO:0000269" key="4">
    <source>
    </source>
</evidence>
<evidence type="ECO:0000305" key="5"/>
<protein>
    <recommendedName>
        <fullName>Expansin-like protein 2</fullName>
        <shortName>Ddexpl2</shortName>
    </recommendedName>
</protein>
<gene>
    <name type="primary">expl2</name>
    <name type="ORF">DDB_G0284677</name>
</gene>
<comment type="function">
    <text evidence="3 4">Unlikely to encode with a protein with expansin activity.</text>
</comment>
<comment type="subcellular location">
    <subcellularLocation>
        <location evidence="4">Secreted</location>
    </subcellularLocation>
</comment>
<comment type="similarity">
    <text evidence="5">Belongs to the expansin family. Expansin A subfamily.</text>
</comment>